<sequence length="815" mass="91802">MPKHLLIVESPAKAKTINKYLGKDFTVLASYGHVRDLVPKEGAVDPENGFAMRYDLIDKNEKHVEAITKAAKTADSIYLATDPDREGEAISWHISEILKERGLLKDKPMQRIVFTEITPRAIKEAIQKPRMIASDLVDAQQARRALDYLVGFNLSPVLWRKVQRGLSAGRVQSPALRMIVEREEEIEAFITREYWSIHAECTHPAQHFSAKLIKLDGKKFEQFTITDSDTAAAAQRRIQQAAQGRLHITDVTNKERKRRPAPPFITSTLQQEASRKLGFTTRKTMQIAQKLYEGIALGEEGSVGLITYMRTDSVNLSLDALSEIRDIIARDYGTNALPDKPNVYTTKSKNAQEAHEAVRPTSALRTPTQVAPYLSNEEHRLYELVWKRTVASQMIPAILNTTSVDLAAGNEHVFRATGTTVVVQGFLAVYEEGKDNKNAEDDDEGRKLPVMKTGENVPLERILTEQHFTQPPPRYTEAALVKALEEYGIGRPSTYASIIQTLLFRKYVDMEGRSFRPTDIGRAVSKFLSSHFTQYVDYDFTAHLEDELDAISRGEEEWIPLMKKFWVPFKELVEDKKDSLDKTDAGSVRLLGIDPTSGKEVSARIGRFGPMVQIGTVDDEEKPRFASLRPNQSIYSISLEEAIELFKMPRVLGEDQSQQVSVGIGRFGPFAKRGSTYVSLKSEDDPYTIDLARATLLINEKEEIARNRIIKDFENSQIQVLNGRFGPYISDGKLNGKIPKDREPASLTLEEAQQLLINTGKPARKNFSTKKTATKNETRKQTTKKRTTDAKATKKVSDKPVKKQIKKRIAPNITQ</sequence>
<protein>
    <recommendedName>
        <fullName evidence="1">DNA topoisomerase 1</fullName>
        <ecNumber evidence="1">5.6.2.1</ecNumber>
    </recommendedName>
    <alternativeName>
        <fullName evidence="1">DNA topoisomerase I</fullName>
    </alternativeName>
    <alternativeName>
        <fullName>Omega-protein</fullName>
    </alternativeName>
    <alternativeName>
        <fullName>Relaxing enzyme</fullName>
    </alternativeName>
    <alternativeName>
        <fullName>Swivelase</fullName>
    </alternativeName>
    <alternativeName>
        <fullName>Untwisting enzyme</fullName>
    </alternativeName>
</protein>
<evidence type="ECO:0000255" key="1">
    <source>
        <dbReference type="HAMAP-Rule" id="MF_00952"/>
    </source>
</evidence>
<evidence type="ECO:0000255" key="2">
    <source>
        <dbReference type="PROSITE-ProRule" id="PRU01383"/>
    </source>
</evidence>
<evidence type="ECO:0000256" key="3">
    <source>
        <dbReference type="SAM" id="MobiDB-lite"/>
    </source>
</evidence>
<comment type="function">
    <text evidence="1">Releases the supercoiling and torsional tension of DNA, which is introduced during the DNA replication and transcription, by transiently cleaving and rejoining one strand of the DNA duplex. Introduces a single-strand break via transesterification at a target site in duplex DNA. The scissile phosphodiester is attacked by the catalytic tyrosine of the enzyme, resulting in the formation of a DNA-(5'-phosphotyrosyl)-enzyme intermediate and the expulsion of a 3'-OH DNA strand. The free DNA strand then undergoes passage around the unbroken strand, thus removing DNA supercoils. Finally, in the religation step, the DNA 3'-OH attacks the covalent intermediate to expel the active-site tyrosine and restore the DNA phosphodiester backbone.</text>
</comment>
<comment type="catalytic activity">
    <reaction evidence="1">
        <text>ATP-independent breakage of single-stranded DNA, followed by passage and rejoining.</text>
        <dbReference type="EC" id="5.6.2.1"/>
    </reaction>
</comment>
<comment type="cofactor">
    <cofactor evidence="1">
        <name>Mg(2+)</name>
        <dbReference type="ChEBI" id="CHEBI:18420"/>
    </cofactor>
</comment>
<comment type="subunit">
    <text evidence="1">Monomer.</text>
</comment>
<comment type="similarity">
    <text evidence="1">Belongs to the type IA topoisomerase family.</text>
</comment>
<reference key="1">
    <citation type="journal article" date="2003" name="J. Bacteriol.">
        <title>Comparative analyses of the complete genome sequences of Pierce's disease and citrus variegated chlorosis strains of Xylella fastidiosa.</title>
        <authorList>
            <person name="Van Sluys M.A."/>
            <person name="de Oliveira M.C."/>
            <person name="Monteiro-Vitorello C.B."/>
            <person name="Miyaki C.Y."/>
            <person name="Furlan L.R."/>
            <person name="Camargo L.E.A."/>
            <person name="da Silva A.C.R."/>
            <person name="Moon D.H."/>
            <person name="Takita M.A."/>
            <person name="Lemos E.G.M."/>
            <person name="Machado M.A."/>
            <person name="Ferro M.I.T."/>
            <person name="da Silva F.R."/>
            <person name="Goldman M.H.S."/>
            <person name="Goldman G.H."/>
            <person name="Lemos M.V.F."/>
            <person name="El-Dorry H."/>
            <person name="Tsai S.M."/>
            <person name="Carrer H."/>
            <person name="Carraro D.M."/>
            <person name="de Oliveira R.C."/>
            <person name="Nunes L.R."/>
            <person name="Siqueira W.J."/>
            <person name="Coutinho L.L."/>
            <person name="Kimura E.T."/>
            <person name="Ferro E.S."/>
            <person name="Harakava R."/>
            <person name="Kuramae E.E."/>
            <person name="Marino C.L."/>
            <person name="Giglioti E."/>
            <person name="Abreu I.L."/>
            <person name="Alves L.M.C."/>
            <person name="do Amaral A.M."/>
            <person name="Baia G.S."/>
            <person name="Blanco S.R."/>
            <person name="Brito M.S."/>
            <person name="Cannavan F.S."/>
            <person name="Celestino A.V."/>
            <person name="da Cunha A.F."/>
            <person name="Fenille R.C."/>
            <person name="Ferro J.A."/>
            <person name="Formighieri E.F."/>
            <person name="Kishi L.T."/>
            <person name="Leoni S.G."/>
            <person name="Oliveira A.R."/>
            <person name="Rosa V.E. Jr."/>
            <person name="Sassaki F.T."/>
            <person name="Sena J.A.D."/>
            <person name="de Souza A.A."/>
            <person name="Truffi D."/>
            <person name="Tsukumo F."/>
            <person name="Yanai G.M."/>
            <person name="Zaros L.G."/>
            <person name="Civerolo E.L."/>
            <person name="Simpson A.J.G."/>
            <person name="Almeida N.F. Jr."/>
            <person name="Setubal J.C."/>
            <person name="Kitajima J.P."/>
        </authorList>
    </citation>
    <scope>NUCLEOTIDE SEQUENCE [LARGE SCALE GENOMIC DNA]</scope>
    <source>
        <strain>Temecula1 / ATCC 700964</strain>
    </source>
</reference>
<name>TOP1_XYLFT</name>
<feature type="chain" id="PRO_0000145173" description="DNA topoisomerase 1">
    <location>
        <begin position="1"/>
        <end position="815"/>
    </location>
</feature>
<feature type="domain" description="Toprim" evidence="1">
    <location>
        <begin position="3"/>
        <end position="119"/>
    </location>
</feature>
<feature type="domain" description="Topo IA-type catalytic" evidence="2">
    <location>
        <begin position="133"/>
        <end position="573"/>
    </location>
</feature>
<feature type="region of interest" description="Interaction with DNA" evidence="1">
    <location>
        <begin position="167"/>
        <end position="172"/>
    </location>
</feature>
<feature type="region of interest" description="Disordered" evidence="3">
    <location>
        <begin position="759"/>
        <end position="815"/>
    </location>
</feature>
<feature type="compositionally biased region" description="Basic and acidic residues" evidence="3">
    <location>
        <begin position="774"/>
        <end position="801"/>
    </location>
</feature>
<feature type="active site" description="O-(5'-phospho-DNA)-tyrosine intermediate" evidence="2">
    <location>
        <position position="308"/>
    </location>
</feature>
<feature type="binding site" evidence="1">
    <location>
        <position position="9"/>
    </location>
    <ligand>
        <name>Mg(2+)</name>
        <dbReference type="ChEBI" id="CHEBI:18420"/>
        <note>catalytic</note>
    </ligand>
</feature>
<feature type="binding site" evidence="1">
    <location>
        <position position="82"/>
    </location>
    <ligand>
        <name>Mg(2+)</name>
        <dbReference type="ChEBI" id="CHEBI:18420"/>
        <note>catalytic</note>
    </ligand>
</feature>
<feature type="site" description="Interaction with DNA" evidence="1">
    <location>
        <position position="33"/>
    </location>
</feature>
<feature type="site" description="Interaction with DNA" evidence="1">
    <location>
        <position position="143"/>
    </location>
</feature>
<feature type="site" description="Interaction with DNA" evidence="1">
    <location>
        <position position="144"/>
    </location>
</feature>
<feature type="site" description="Interaction with DNA" evidence="1">
    <location>
        <position position="147"/>
    </location>
</feature>
<feature type="site" description="Interaction with DNA" evidence="1">
    <location>
        <position position="159"/>
    </location>
</feature>
<feature type="site" description="Interaction with DNA" evidence="1">
    <location>
        <position position="310"/>
    </location>
</feature>
<feature type="site" description="Interaction with DNA" evidence="1">
    <location>
        <position position="505"/>
    </location>
</feature>
<organism>
    <name type="scientific">Xylella fastidiosa (strain Temecula1 / ATCC 700964)</name>
    <dbReference type="NCBI Taxonomy" id="183190"/>
    <lineage>
        <taxon>Bacteria</taxon>
        <taxon>Pseudomonadati</taxon>
        <taxon>Pseudomonadota</taxon>
        <taxon>Gammaproteobacteria</taxon>
        <taxon>Lysobacterales</taxon>
        <taxon>Lysobacteraceae</taxon>
        <taxon>Xylella</taxon>
    </lineage>
</organism>
<keyword id="KW-0238">DNA-binding</keyword>
<keyword id="KW-0413">Isomerase</keyword>
<keyword id="KW-0460">Magnesium</keyword>
<keyword id="KW-0479">Metal-binding</keyword>
<keyword id="KW-1185">Reference proteome</keyword>
<keyword id="KW-0799">Topoisomerase</keyword>
<proteinExistence type="inferred from homology"/>
<gene>
    <name evidence="1" type="primary">topA</name>
    <name type="ordered locus">PD_1767</name>
</gene>
<dbReference type="EC" id="5.6.2.1" evidence="1"/>
<dbReference type="EMBL" id="AE009442">
    <property type="protein sequence ID" value="AAO29601.1"/>
    <property type="molecule type" value="Genomic_DNA"/>
</dbReference>
<dbReference type="RefSeq" id="WP_004089635.1">
    <property type="nucleotide sequence ID" value="NC_004556.1"/>
</dbReference>
<dbReference type="SMR" id="Q87AQ6"/>
<dbReference type="KEGG" id="xft:PD_1767"/>
<dbReference type="HOGENOM" id="CLU_002929_0_2_6"/>
<dbReference type="Proteomes" id="UP000002516">
    <property type="component" value="Chromosome"/>
</dbReference>
<dbReference type="GO" id="GO:0003677">
    <property type="term" value="F:DNA binding"/>
    <property type="evidence" value="ECO:0007669"/>
    <property type="project" value="UniProtKB-KW"/>
</dbReference>
<dbReference type="GO" id="GO:0003917">
    <property type="term" value="F:DNA topoisomerase type I (single strand cut, ATP-independent) activity"/>
    <property type="evidence" value="ECO:0007669"/>
    <property type="project" value="UniProtKB-UniRule"/>
</dbReference>
<dbReference type="GO" id="GO:0046872">
    <property type="term" value="F:metal ion binding"/>
    <property type="evidence" value="ECO:0007669"/>
    <property type="project" value="UniProtKB-KW"/>
</dbReference>
<dbReference type="GO" id="GO:0006265">
    <property type="term" value="P:DNA topological change"/>
    <property type="evidence" value="ECO:0007669"/>
    <property type="project" value="UniProtKB-UniRule"/>
</dbReference>
<dbReference type="CDD" id="cd00186">
    <property type="entry name" value="TOP1Ac"/>
    <property type="match status" value="1"/>
</dbReference>
<dbReference type="CDD" id="cd03363">
    <property type="entry name" value="TOPRIM_TopoIA_TopoI"/>
    <property type="match status" value="1"/>
</dbReference>
<dbReference type="Gene3D" id="3.40.50.140">
    <property type="match status" value="1"/>
</dbReference>
<dbReference type="Gene3D" id="1.10.460.10">
    <property type="entry name" value="Topoisomerase I, domain 2"/>
    <property type="match status" value="1"/>
</dbReference>
<dbReference type="Gene3D" id="2.70.20.10">
    <property type="entry name" value="Topoisomerase I, domain 3"/>
    <property type="match status" value="1"/>
</dbReference>
<dbReference type="Gene3D" id="1.10.290.10">
    <property type="entry name" value="Topoisomerase I, domain 4"/>
    <property type="match status" value="1"/>
</dbReference>
<dbReference type="HAMAP" id="MF_00952">
    <property type="entry name" value="Topoisom_1_prok"/>
    <property type="match status" value="1"/>
</dbReference>
<dbReference type="InterPro" id="IPR000380">
    <property type="entry name" value="Topo_IA"/>
</dbReference>
<dbReference type="InterPro" id="IPR003601">
    <property type="entry name" value="Topo_IA_2"/>
</dbReference>
<dbReference type="InterPro" id="IPR023406">
    <property type="entry name" value="Topo_IA_AS"/>
</dbReference>
<dbReference type="InterPro" id="IPR013497">
    <property type="entry name" value="Topo_IA_cen"/>
</dbReference>
<dbReference type="InterPro" id="IPR013824">
    <property type="entry name" value="Topo_IA_cen_sub1"/>
</dbReference>
<dbReference type="InterPro" id="IPR013825">
    <property type="entry name" value="Topo_IA_cen_sub2"/>
</dbReference>
<dbReference type="InterPro" id="IPR013826">
    <property type="entry name" value="Topo_IA_cen_sub3"/>
</dbReference>
<dbReference type="InterPro" id="IPR023405">
    <property type="entry name" value="Topo_IA_core_domain"/>
</dbReference>
<dbReference type="InterPro" id="IPR003602">
    <property type="entry name" value="Topo_IA_DNA-bd_dom"/>
</dbReference>
<dbReference type="InterPro" id="IPR005733">
    <property type="entry name" value="TopoI_bac-type"/>
</dbReference>
<dbReference type="InterPro" id="IPR028612">
    <property type="entry name" value="Topoisom_1_IA"/>
</dbReference>
<dbReference type="InterPro" id="IPR025589">
    <property type="entry name" value="Toprim_C_rpt"/>
</dbReference>
<dbReference type="InterPro" id="IPR006171">
    <property type="entry name" value="TOPRIM_dom"/>
</dbReference>
<dbReference type="InterPro" id="IPR034149">
    <property type="entry name" value="TOPRIM_TopoI"/>
</dbReference>
<dbReference type="NCBIfam" id="NF006451">
    <property type="entry name" value="PRK08780.1"/>
    <property type="match status" value="1"/>
</dbReference>
<dbReference type="NCBIfam" id="TIGR01051">
    <property type="entry name" value="topA_bact"/>
    <property type="match status" value="1"/>
</dbReference>
<dbReference type="PANTHER" id="PTHR42785:SF1">
    <property type="entry name" value="DNA TOPOISOMERASE"/>
    <property type="match status" value="1"/>
</dbReference>
<dbReference type="PANTHER" id="PTHR42785">
    <property type="entry name" value="DNA TOPOISOMERASE, TYPE IA, CORE"/>
    <property type="match status" value="1"/>
</dbReference>
<dbReference type="Pfam" id="PF01131">
    <property type="entry name" value="Topoisom_bac"/>
    <property type="match status" value="1"/>
</dbReference>
<dbReference type="Pfam" id="PF01751">
    <property type="entry name" value="Toprim"/>
    <property type="match status" value="1"/>
</dbReference>
<dbReference type="Pfam" id="PF13368">
    <property type="entry name" value="Toprim_C_rpt"/>
    <property type="match status" value="3"/>
</dbReference>
<dbReference type="PRINTS" id="PR00417">
    <property type="entry name" value="PRTPISMRASEI"/>
</dbReference>
<dbReference type="SMART" id="SM00437">
    <property type="entry name" value="TOP1Ac"/>
    <property type="match status" value="1"/>
</dbReference>
<dbReference type="SMART" id="SM00436">
    <property type="entry name" value="TOP1Bc"/>
    <property type="match status" value="1"/>
</dbReference>
<dbReference type="SMART" id="SM00493">
    <property type="entry name" value="TOPRIM"/>
    <property type="match status" value="1"/>
</dbReference>
<dbReference type="SUPFAM" id="SSF56712">
    <property type="entry name" value="Prokaryotic type I DNA topoisomerase"/>
    <property type="match status" value="1"/>
</dbReference>
<dbReference type="PROSITE" id="PS00396">
    <property type="entry name" value="TOPO_IA_1"/>
    <property type="match status" value="1"/>
</dbReference>
<dbReference type="PROSITE" id="PS52039">
    <property type="entry name" value="TOPO_IA_2"/>
    <property type="match status" value="1"/>
</dbReference>
<dbReference type="PROSITE" id="PS50880">
    <property type="entry name" value="TOPRIM"/>
    <property type="match status" value="1"/>
</dbReference>
<accession>Q87AQ6</accession>